<comment type="function">
    <text evidence="1">Produces ATP from ADP in the presence of a proton gradient across the membrane. The gamma chain is believed to be important in regulating ATPase activity and the flow of protons through the CF(0) complex.</text>
</comment>
<comment type="subunit">
    <text evidence="1">F-type ATPases have 2 components, CF(1) - the catalytic core - and CF(0) - the membrane proton channel. CF(1) has five subunits: alpha(3), beta(3), gamma(1), delta(1), epsilon(1). CF(0) has three main subunits: a, b and c.</text>
</comment>
<comment type="subcellular location">
    <subcellularLocation>
        <location evidence="1">Cell inner membrane</location>
        <topology evidence="1">Peripheral membrane protein</topology>
    </subcellularLocation>
</comment>
<comment type="similarity">
    <text evidence="1">Belongs to the ATPase gamma chain family.</text>
</comment>
<reference key="1">
    <citation type="journal article" date="2009" name="J. Bacteriol.">
        <title>Complete genome sequence of Haemophilus parasuis SH0165.</title>
        <authorList>
            <person name="Yue M."/>
            <person name="Yang F."/>
            <person name="Yang J."/>
            <person name="Bei W."/>
            <person name="Cai X."/>
            <person name="Chen L."/>
            <person name="Dong J."/>
            <person name="Zhou R."/>
            <person name="Jin M."/>
            <person name="Jin Q."/>
            <person name="Chen H."/>
        </authorList>
    </citation>
    <scope>NUCLEOTIDE SEQUENCE [LARGE SCALE GENOMIC DNA]</scope>
    <source>
        <strain>SH0165</strain>
    </source>
</reference>
<accession>B8F773</accession>
<protein>
    <recommendedName>
        <fullName evidence="1">ATP synthase gamma chain</fullName>
    </recommendedName>
    <alternativeName>
        <fullName evidence="1">ATP synthase F1 sector gamma subunit</fullName>
    </alternativeName>
    <alternativeName>
        <fullName evidence="1">F-ATPase gamma subunit</fullName>
    </alternativeName>
</protein>
<organism>
    <name type="scientific">Glaesserella parasuis serovar 5 (strain SH0165)</name>
    <name type="common">Haemophilus parasuis</name>
    <dbReference type="NCBI Taxonomy" id="557723"/>
    <lineage>
        <taxon>Bacteria</taxon>
        <taxon>Pseudomonadati</taxon>
        <taxon>Pseudomonadota</taxon>
        <taxon>Gammaproteobacteria</taxon>
        <taxon>Pasteurellales</taxon>
        <taxon>Pasteurellaceae</taxon>
        <taxon>Glaesserella</taxon>
    </lineage>
</organism>
<gene>
    <name evidence="1" type="primary">atpG</name>
    <name type="ordered locus">HAPS_1625</name>
</gene>
<keyword id="KW-0066">ATP synthesis</keyword>
<keyword id="KW-0997">Cell inner membrane</keyword>
<keyword id="KW-1003">Cell membrane</keyword>
<keyword id="KW-0139">CF(1)</keyword>
<keyword id="KW-0375">Hydrogen ion transport</keyword>
<keyword id="KW-0406">Ion transport</keyword>
<keyword id="KW-0472">Membrane</keyword>
<keyword id="KW-1185">Reference proteome</keyword>
<keyword id="KW-0813">Transport</keyword>
<evidence type="ECO:0000255" key="1">
    <source>
        <dbReference type="HAMAP-Rule" id="MF_00815"/>
    </source>
</evidence>
<sequence>MAGAKEIRTKIASVRNTQKITKAMEMVAASKMRKTQERMSASRPYSDAIRKVISHIAKGSIDYKHPFLTEREVKKVGFIVVSTDRGLCGGLNINLFKTVLNELKTRKDKGVDSVLGLVGNKAVSFFQSMGVEIKAQVTGLGDTPAMEDLVGIVNGMIENYRNGEVDEVYIIYNRFVNTMSQKPTVQKLLPLPELEDDDLENKGSWDYIYEPNPKVLLDSLLVRYLESQVYQAIVDNLASEQAARMVAMKAATDNAGNLINELQLVYNKARQASITNELNEIVAGAAAI</sequence>
<dbReference type="EMBL" id="CP001321">
    <property type="protein sequence ID" value="ACL33175.1"/>
    <property type="molecule type" value="Genomic_DNA"/>
</dbReference>
<dbReference type="RefSeq" id="WP_015939855.1">
    <property type="nucleotide sequence ID" value="NC_011852.1"/>
</dbReference>
<dbReference type="SMR" id="B8F773"/>
<dbReference type="STRING" id="557723.HAPS_1625"/>
<dbReference type="GeneID" id="66619867"/>
<dbReference type="KEGG" id="hap:HAPS_1625"/>
<dbReference type="HOGENOM" id="CLU_050669_0_1_6"/>
<dbReference type="Proteomes" id="UP000006743">
    <property type="component" value="Chromosome"/>
</dbReference>
<dbReference type="GO" id="GO:0005886">
    <property type="term" value="C:plasma membrane"/>
    <property type="evidence" value="ECO:0007669"/>
    <property type="project" value="UniProtKB-SubCell"/>
</dbReference>
<dbReference type="GO" id="GO:0045259">
    <property type="term" value="C:proton-transporting ATP synthase complex"/>
    <property type="evidence" value="ECO:0007669"/>
    <property type="project" value="UniProtKB-KW"/>
</dbReference>
<dbReference type="GO" id="GO:0005524">
    <property type="term" value="F:ATP binding"/>
    <property type="evidence" value="ECO:0007669"/>
    <property type="project" value="UniProtKB-UniRule"/>
</dbReference>
<dbReference type="GO" id="GO:0046933">
    <property type="term" value="F:proton-transporting ATP synthase activity, rotational mechanism"/>
    <property type="evidence" value="ECO:0007669"/>
    <property type="project" value="UniProtKB-UniRule"/>
</dbReference>
<dbReference type="GO" id="GO:0042777">
    <property type="term" value="P:proton motive force-driven plasma membrane ATP synthesis"/>
    <property type="evidence" value="ECO:0007669"/>
    <property type="project" value="UniProtKB-UniRule"/>
</dbReference>
<dbReference type="CDD" id="cd12151">
    <property type="entry name" value="F1-ATPase_gamma"/>
    <property type="match status" value="1"/>
</dbReference>
<dbReference type="FunFam" id="1.10.287.80:FF:000005">
    <property type="entry name" value="ATP synthase gamma chain"/>
    <property type="match status" value="2"/>
</dbReference>
<dbReference type="FunFam" id="3.40.1380.10:FF:000006">
    <property type="entry name" value="ATP synthase gamma chain"/>
    <property type="match status" value="1"/>
</dbReference>
<dbReference type="Gene3D" id="3.40.1380.10">
    <property type="match status" value="1"/>
</dbReference>
<dbReference type="Gene3D" id="1.10.287.80">
    <property type="entry name" value="ATP synthase, gamma subunit, helix hairpin domain"/>
    <property type="match status" value="2"/>
</dbReference>
<dbReference type="HAMAP" id="MF_00815">
    <property type="entry name" value="ATP_synth_gamma_bact"/>
    <property type="match status" value="1"/>
</dbReference>
<dbReference type="InterPro" id="IPR035968">
    <property type="entry name" value="ATP_synth_F1_ATPase_gsu"/>
</dbReference>
<dbReference type="InterPro" id="IPR000131">
    <property type="entry name" value="ATP_synth_F1_gsu"/>
</dbReference>
<dbReference type="InterPro" id="IPR023632">
    <property type="entry name" value="ATP_synth_F1_gsu_CS"/>
</dbReference>
<dbReference type="NCBIfam" id="TIGR01146">
    <property type="entry name" value="ATPsyn_F1gamma"/>
    <property type="match status" value="1"/>
</dbReference>
<dbReference type="NCBIfam" id="NF004144">
    <property type="entry name" value="PRK05621.1-1"/>
    <property type="match status" value="1"/>
</dbReference>
<dbReference type="PANTHER" id="PTHR11693">
    <property type="entry name" value="ATP SYNTHASE GAMMA CHAIN"/>
    <property type="match status" value="1"/>
</dbReference>
<dbReference type="PANTHER" id="PTHR11693:SF22">
    <property type="entry name" value="ATP SYNTHASE SUBUNIT GAMMA, MITOCHONDRIAL"/>
    <property type="match status" value="1"/>
</dbReference>
<dbReference type="Pfam" id="PF00231">
    <property type="entry name" value="ATP-synt"/>
    <property type="match status" value="1"/>
</dbReference>
<dbReference type="PRINTS" id="PR00126">
    <property type="entry name" value="ATPASEGAMMA"/>
</dbReference>
<dbReference type="SUPFAM" id="SSF52943">
    <property type="entry name" value="ATP synthase (F1-ATPase), gamma subunit"/>
    <property type="match status" value="1"/>
</dbReference>
<dbReference type="PROSITE" id="PS00153">
    <property type="entry name" value="ATPASE_GAMMA"/>
    <property type="match status" value="1"/>
</dbReference>
<name>ATPG_GLAP5</name>
<feature type="chain" id="PRO_1000148621" description="ATP synthase gamma chain">
    <location>
        <begin position="1"/>
        <end position="288"/>
    </location>
</feature>
<proteinExistence type="inferred from homology"/>